<comment type="interaction">
    <interactant intactId="EBI-12041267">
        <id>Q8TD86</id>
    </interactant>
    <interactant intactId="EBI-4287270">
        <id>P48539</id>
        <label>PCP4</label>
    </interactant>
    <organismsDiffer>false</organismsDiffer>
    <experiments>3</experiments>
</comment>
<comment type="subcellular location">
    <subcellularLocation>
        <location evidence="2">Cytoplasm</location>
    </subcellularLocation>
    <subcellularLocation>
        <location evidence="2">Nucleus</location>
    </subcellularLocation>
</comment>
<comment type="tissue specificity">
    <text evidence="2">Expressed in prostate, thymus, heart, skeleton muscle, bone marrow and ovary.</text>
</comment>
<comment type="similarity">
    <text evidence="3">Belongs to the calmodulin family. Calglandulin subfamily.</text>
</comment>
<feature type="chain" id="PRO_0000073548" description="Calmodulin-like protein 6">
    <location>
        <begin position="1"/>
        <end position="181"/>
    </location>
</feature>
<feature type="domain" description="EF-hand 1" evidence="1">
    <location>
        <begin position="33"/>
        <end position="68"/>
    </location>
</feature>
<feature type="domain" description="EF-hand 2" evidence="1">
    <location>
        <begin position="69"/>
        <end position="104"/>
    </location>
</feature>
<feature type="domain" description="EF-hand 3" evidence="1">
    <location>
        <begin position="107"/>
        <end position="142"/>
    </location>
</feature>
<feature type="domain" description="EF-hand 4" evidence="1">
    <location>
        <begin position="143"/>
        <end position="178"/>
    </location>
</feature>
<feature type="binding site" evidence="1">
    <location>
        <position position="156"/>
    </location>
    <ligand>
        <name>Ca(2+)</name>
        <dbReference type="ChEBI" id="CHEBI:29108"/>
    </ligand>
</feature>
<feature type="binding site" evidence="1">
    <location>
        <position position="158"/>
    </location>
    <ligand>
        <name>Ca(2+)</name>
        <dbReference type="ChEBI" id="CHEBI:29108"/>
    </ligand>
</feature>
<feature type="binding site" evidence="1">
    <location>
        <position position="160"/>
    </location>
    <ligand>
        <name>Ca(2+)</name>
        <dbReference type="ChEBI" id="CHEBI:29108"/>
    </ligand>
</feature>
<feature type="binding site" evidence="1">
    <location>
        <position position="162"/>
    </location>
    <ligand>
        <name>Ca(2+)</name>
        <dbReference type="ChEBI" id="CHEBI:29108"/>
    </ligand>
</feature>
<feature type="binding site" evidence="1">
    <location>
        <position position="167"/>
    </location>
    <ligand>
        <name>Ca(2+)</name>
        <dbReference type="ChEBI" id="CHEBI:29108"/>
    </ligand>
</feature>
<feature type="sequence variant" id="VAR_048588" description="In dbSNP:rs28581776.">
    <original>W</original>
    <variation>R</variation>
    <location>
        <position position="60"/>
    </location>
</feature>
<name>CALL6_HUMAN</name>
<gene>
    <name type="primary">CALML6</name>
    <name type="synonym">CAGLP</name>
    <name type="synonym">CALGP</name>
</gene>
<keyword id="KW-0106">Calcium</keyword>
<keyword id="KW-0963">Cytoplasm</keyword>
<keyword id="KW-0479">Metal-binding</keyword>
<keyword id="KW-0539">Nucleus</keyword>
<keyword id="KW-1185">Reference proteome</keyword>
<keyword id="KW-0677">Repeat</keyword>
<organism>
    <name type="scientific">Homo sapiens</name>
    <name type="common">Human</name>
    <dbReference type="NCBI Taxonomy" id="9606"/>
    <lineage>
        <taxon>Eukaryota</taxon>
        <taxon>Metazoa</taxon>
        <taxon>Chordata</taxon>
        <taxon>Craniata</taxon>
        <taxon>Vertebrata</taxon>
        <taxon>Euteleostomi</taxon>
        <taxon>Mammalia</taxon>
        <taxon>Eutheria</taxon>
        <taxon>Euarchontoglires</taxon>
        <taxon>Primates</taxon>
        <taxon>Haplorrhini</taxon>
        <taxon>Catarrhini</taxon>
        <taxon>Hominidae</taxon>
        <taxon>Homo</taxon>
    </lineage>
</organism>
<accession>Q8TD86</accession>
<accession>A2A2M3</accession>
<accession>Q6Q2C4</accession>
<dbReference type="EMBL" id="AY566229">
    <property type="protein sequence ID" value="AAS67001.1"/>
    <property type="molecule type" value="mRNA"/>
</dbReference>
<dbReference type="EMBL" id="AF490905">
    <property type="protein sequence ID" value="AAM08411.2"/>
    <property type="molecule type" value="mRNA"/>
</dbReference>
<dbReference type="EMBL" id="AL109917">
    <property type="status" value="NOT_ANNOTATED_CDS"/>
    <property type="molecule type" value="Genomic_DNA"/>
</dbReference>
<dbReference type="CCDS" id="CCDS30566.1"/>
<dbReference type="RefSeq" id="NP_619650.2">
    <property type="nucleotide sequence ID" value="NM_138705.4"/>
</dbReference>
<dbReference type="SMR" id="Q8TD86"/>
<dbReference type="BioGRID" id="127872">
    <property type="interactions" value="8"/>
</dbReference>
<dbReference type="FunCoup" id="Q8TD86">
    <property type="interactions" value="1638"/>
</dbReference>
<dbReference type="IntAct" id="Q8TD86">
    <property type="interactions" value="2"/>
</dbReference>
<dbReference type="STRING" id="9606.ENSP00000304643"/>
<dbReference type="iPTMnet" id="Q8TD86"/>
<dbReference type="PhosphoSitePlus" id="Q8TD86"/>
<dbReference type="BioMuta" id="CALML6"/>
<dbReference type="DMDM" id="74762617"/>
<dbReference type="PaxDb" id="9606-ENSP00000304643"/>
<dbReference type="PeptideAtlas" id="Q8TD86"/>
<dbReference type="Antibodypedia" id="1629">
    <property type="antibodies" value="109 antibodies from 23 providers"/>
</dbReference>
<dbReference type="DNASU" id="163688"/>
<dbReference type="Ensembl" id="ENST00000307786.8">
    <property type="protein sequence ID" value="ENSP00000304643.3"/>
    <property type="gene ID" value="ENSG00000169885.10"/>
</dbReference>
<dbReference type="GeneID" id="163688"/>
<dbReference type="KEGG" id="hsa:163688"/>
<dbReference type="MANE-Select" id="ENST00000307786.8">
    <property type="protein sequence ID" value="ENSP00000304643.3"/>
    <property type="RefSeq nucleotide sequence ID" value="NM_138705.4"/>
    <property type="RefSeq protein sequence ID" value="NP_619650.2"/>
</dbReference>
<dbReference type="UCSC" id="uc001aih.1">
    <property type="organism name" value="human"/>
</dbReference>
<dbReference type="AGR" id="HGNC:24193"/>
<dbReference type="CTD" id="163688"/>
<dbReference type="DisGeNET" id="163688"/>
<dbReference type="GeneCards" id="CALML6"/>
<dbReference type="HGNC" id="HGNC:24193">
    <property type="gene designation" value="CALML6"/>
</dbReference>
<dbReference type="HPA" id="ENSG00000169885">
    <property type="expression patterns" value="Group enriched (skeletal muscle, tongue)"/>
</dbReference>
<dbReference type="MIM" id="610171">
    <property type="type" value="gene"/>
</dbReference>
<dbReference type="neXtProt" id="NX_Q8TD86"/>
<dbReference type="OpenTargets" id="ENSG00000169885"/>
<dbReference type="PharmGKB" id="PA134968051"/>
<dbReference type="VEuPathDB" id="HostDB:ENSG00000169885"/>
<dbReference type="eggNOG" id="KOG0027">
    <property type="taxonomic scope" value="Eukaryota"/>
</dbReference>
<dbReference type="GeneTree" id="ENSGT00940000163135"/>
<dbReference type="InParanoid" id="Q8TD86"/>
<dbReference type="OMA" id="HKGYIDW"/>
<dbReference type="OrthoDB" id="26525at2759"/>
<dbReference type="PAN-GO" id="Q8TD86">
    <property type="GO annotations" value="2 GO annotations based on evolutionary models"/>
</dbReference>
<dbReference type="PhylomeDB" id="Q8TD86"/>
<dbReference type="TreeFam" id="TF354258"/>
<dbReference type="PathwayCommons" id="Q8TD86"/>
<dbReference type="SignaLink" id="Q8TD86"/>
<dbReference type="BioGRID-ORCS" id="163688">
    <property type="hits" value="34 hits in 1143 CRISPR screens"/>
</dbReference>
<dbReference type="GenomeRNAi" id="163688"/>
<dbReference type="Pharos" id="Q8TD86">
    <property type="development level" value="Tbio"/>
</dbReference>
<dbReference type="PRO" id="PR:Q8TD86"/>
<dbReference type="Proteomes" id="UP000005640">
    <property type="component" value="Chromosome 1"/>
</dbReference>
<dbReference type="RNAct" id="Q8TD86">
    <property type="molecule type" value="protein"/>
</dbReference>
<dbReference type="Bgee" id="ENSG00000169885">
    <property type="expression patterns" value="Expressed in hindlimb stylopod muscle and 94 other cell types or tissues"/>
</dbReference>
<dbReference type="ExpressionAtlas" id="Q8TD86">
    <property type="expression patterns" value="baseline and differential"/>
</dbReference>
<dbReference type="GO" id="GO:0005737">
    <property type="term" value="C:cytoplasm"/>
    <property type="evidence" value="ECO:0000318"/>
    <property type="project" value="GO_Central"/>
</dbReference>
<dbReference type="GO" id="GO:0005634">
    <property type="term" value="C:nucleus"/>
    <property type="evidence" value="ECO:0007669"/>
    <property type="project" value="UniProtKB-SubCell"/>
</dbReference>
<dbReference type="GO" id="GO:0005509">
    <property type="term" value="F:calcium ion binding"/>
    <property type="evidence" value="ECO:0000318"/>
    <property type="project" value="GO_Central"/>
</dbReference>
<dbReference type="GO" id="GO:0030234">
    <property type="term" value="F:enzyme regulator activity"/>
    <property type="evidence" value="ECO:0000318"/>
    <property type="project" value="GO_Central"/>
</dbReference>
<dbReference type="GO" id="GO:0000226">
    <property type="term" value="P:microtubule cytoskeleton organization"/>
    <property type="evidence" value="ECO:0000318"/>
    <property type="project" value="GO_Central"/>
</dbReference>
<dbReference type="CDD" id="cd00051">
    <property type="entry name" value="EFh"/>
    <property type="match status" value="1"/>
</dbReference>
<dbReference type="FunFam" id="1.10.238.10:FF:000163">
    <property type="entry name" value="Calmodulin like 6"/>
    <property type="match status" value="1"/>
</dbReference>
<dbReference type="FunFam" id="1.10.238.10:FF:000264">
    <property type="entry name" value="Calmodulin like 6"/>
    <property type="match status" value="1"/>
</dbReference>
<dbReference type="Gene3D" id="1.10.238.10">
    <property type="entry name" value="EF-hand"/>
    <property type="match status" value="2"/>
</dbReference>
<dbReference type="InterPro" id="IPR050230">
    <property type="entry name" value="CALM/Myosin/TropC-like"/>
</dbReference>
<dbReference type="InterPro" id="IPR011992">
    <property type="entry name" value="EF-hand-dom_pair"/>
</dbReference>
<dbReference type="InterPro" id="IPR018247">
    <property type="entry name" value="EF_Hand_1_Ca_BS"/>
</dbReference>
<dbReference type="InterPro" id="IPR002048">
    <property type="entry name" value="EF_hand_dom"/>
</dbReference>
<dbReference type="PANTHER" id="PTHR23048:SF56">
    <property type="entry name" value="CALMODULIN 2"/>
    <property type="match status" value="1"/>
</dbReference>
<dbReference type="PANTHER" id="PTHR23048">
    <property type="entry name" value="MYOSIN LIGHT CHAIN 1, 3"/>
    <property type="match status" value="1"/>
</dbReference>
<dbReference type="Pfam" id="PF13499">
    <property type="entry name" value="EF-hand_7"/>
    <property type="match status" value="1"/>
</dbReference>
<dbReference type="SMART" id="SM00054">
    <property type="entry name" value="EFh"/>
    <property type="match status" value="4"/>
</dbReference>
<dbReference type="SUPFAM" id="SSF47473">
    <property type="entry name" value="EF-hand"/>
    <property type="match status" value="1"/>
</dbReference>
<dbReference type="PROSITE" id="PS00018">
    <property type="entry name" value="EF_HAND_1"/>
    <property type="match status" value="1"/>
</dbReference>
<dbReference type="PROSITE" id="PS50222">
    <property type="entry name" value="EF_HAND_2"/>
    <property type="match status" value="4"/>
</dbReference>
<reference key="1">
    <citation type="journal article" date="2004" name="DNA Seq.">
        <title>Cloning and characterization of human CAGLP gene encoding a novel EF-hand protein.</title>
        <authorList>
            <person name="Chen S."/>
            <person name="Guo J.-H."/>
            <person name="Saiyin H."/>
            <person name="Chen L."/>
            <person name="Zhou G.-J."/>
            <person name="Huang C.-Q."/>
            <person name="Yu L."/>
        </authorList>
    </citation>
    <scope>NUCLEOTIDE SEQUENCE [MRNA]</scope>
    <scope>SUBCELLULAR LOCATION</scope>
    <scope>TISSUE SPECIFICITY</scope>
    <source>
        <tissue>Skeletal muscle</tissue>
    </source>
</reference>
<reference key="2">
    <citation type="submission" date="2004-08" db="EMBL/GenBank/DDBJ databases">
        <authorList>
            <person name="Guo J.-H."/>
            <person name="Yu L."/>
        </authorList>
    </citation>
    <scope>SEQUENCE REVISION</scope>
</reference>
<reference key="3">
    <citation type="journal article" date="2006" name="Nature">
        <title>The DNA sequence and biological annotation of human chromosome 1.</title>
        <authorList>
            <person name="Gregory S.G."/>
            <person name="Barlow K.F."/>
            <person name="McLay K.E."/>
            <person name="Kaul R."/>
            <person name="Swarbreck D."/>
            <person name="Dunham A."/>
            <person name="Scott C.E."/>
            <person name="Howe K.L."/>
            <person name="Woodfine K."/>
            <person name="Spencer C.C.A."/>
            <person name="Jones M.C."/>
            <person name="Gillson C."/>
            <person name="Searle S."/>
            <person name="Zhou Y."/>
            <person name="Kokocinski F."/>
            <person name="McDonald L."/>
            <person name="Evans R."/>
            <person name="Phillips K."/>
            <person name="Atkinson A."/>
            <person name="Cooper R."/>
            <person name="Jones C."/>
            <person name="Hall R.E."/>
            <person name="Andrews T.D."/>
            <person name="Lloyd C."/>
            <person name="Ainscough R."/>
            <person name="Almeida J.P."/>
            <person name="Ambrose K.D."/>
            <person name="Anderson F."/>
            <person name="Andrew R.W."/>
            <person name="Ashwell R.I.S."/>
            <person name="Aubin K."/>
            <person name="Babbage A.K."/>
            <person name="Bagguley C.L."/>
            <person name="Bailey J."/>
            <person name="Beasley H."/>
            <person name="Bethel G."/>
            <person name="Bird C.P."/>
            <person name="Bray-Allen S."/>
            <person name="Brown J.Y."/>
            <person name="Brown A.J."/>
            <person name="Buckley D."/>
            <person name="Burton J."/>
            <person name="Bye J."/>
            <person name="Carder C."/>
            <person name="Chapman J.C."/>
            <person name="Clark S.Y."/>
            <person name="Clarke G."/>
            <person name="Clee C."/>
            <person name="Cobley V."/>
            <person name="Collier R.E."/>
            <person name="Corby N."/>
            <person name="Coville G.J."/>
            <person name="Davies J."/>
            <person name="Deadman R."/>
            <person name="Dunn M."/>
            <person name="Earthrowl M."/>
            <person name="Ellington A.G."/>
            <person name="Errington H."/>
            <person name="Frankish A."/>
            <person name="Frankland J."/>
            <person name="French L."/>
            <person name="Garner P."/>
            <person name="Garnett J."/>
            <person name="Gay L."/>
            <person name="Ghori M.R.J."/>
            <person name="Gibson R."/>
            <person name="Gilby L.M."/>
            <person name="Gillett W."/>
            <person name="Glithero R.J."/>
            <person name="Grafham D.V."/>
            <person name="Griffiths C."/>
            <person name="Griffiths-Jones S."/>
            <person name="Grocock R."/>
            <person name="Hammond S."/>
            <person name="Harrison E.S.I."/>
            <person name="Hart E."/>
            <person name="Haugen E."/>
            <person name="Heath P.D."/>
            <person name="Holmes S."/>
            <person name="Holt K."/>
            <person name="Howden P.J."/>
            <person name="Hunt A.R."/>
            <person name="Hunt S.E."/>
            <person name="Hunter G."/>
            <person name="Isherwood J."/>
            <person name="James R."/>
            <person name="Johnson C."/>
            <person name="Johnson D."/>
            <person name="Joy A."/>
            <person name="Kay M."/>
            <person name="Kershaw J.K."/>
            <person name="Kibukawa M."/>
            <person name="Kimberley A.M."/>
            <person name="King A."/>
            <person name="Knights A.J."/>
            <person name="Lad H."/>
            <person name="Laird G."/>
            <person name="Lawlor S."/>
            <person name="Leongamornlert D.A."/>
            <person name="Lloyd D.M."/>
            <person name="Loveland J."/>
            <person name="Lovell J."/>
            <person name="Lush M.J."/>
            <person name="Lyne R."/>
            <person name="Martin S."/>
            <person name="Mashreghi-Mohammadi M."/>
            <person name="Matthews L."/>
            <person name="Matthews N.S.W."/>
            <person name="McLaren S."/>
            <person name="Milne S."/>
            <person name="Mistry S."/>
            <person name="Moore M.J.F."/>
            <person name="Nickerson T."/>
            <person name="O'Dell C.N."/>
            <person name="Oliver K."/>
            <person name="Palmeiri A."/>
            <person name="Palmer S.A."/>
            <person name="Parker A."/>
            <person name="Patel D."/>
            <person name="Pearce A.V."/>
            <person name="Peck A.I."/>
            <person name="Pelan S."/>
            <person name="Phelps K."/>
            <person name="Phillimore B.J."/>
            <person name="Plumb R."/>
            <person name="Rajan J."/>
            <person name="Raymond C."/>
            <person name="Rouse G."/>
            <person name="Saenphimmachak C."/>
            <person name="Sehra H.K."/>
            <person name="Sheridan E."/>
            <person name="Shownkeen R."/>
            <person name="Sims S."/>
            <person name="Skuce C.D."/>
            <person name="Smith M."/>
            <person name="Steward C."/>
            <person name="Subramanian S."/>
            <person name="Sycamore N."/>
            <person name="Tracey A."/>
            <person name="Tromans A."/>
            <person name="Van Helmond Z."/>
            <person name="Wall M."/>
            <person name="Wallis J.M."/>
            <person name="White S."/>
            <person name="Whitehead S.L."/>
            <person name="Wilkinson J.E."/>
            <person name="Willey D.L."/>
            <person name="Williams H."/>
            <person name="Wilming L."/>
            <person name="Wray P.W."/>
            <person name="Wu Z."/>
            <person name="Coulson A."/>
            <person name="Vaudin M."/>
            <person name="Sulston J.E."/>
            <person name="Durbin R.M."/>
            <person name="Hubbard T."/>
            <person name="Wooster R."/>
            <person name="Dunham I."/>
            <person name="Carter N.P."/>
            <person name="McVean G."/>
            <person name="Ross M.T."/>
            <person name="Harrow J."/>
            <person name="Olson M.V."/>
            <person name="Beck S."/>
            <person name="Rogers J."/>
            <person name="Bentley D.R."/>
        </authorList>
    </citation>
    <scope>NUCLEOTIDE SEQUENCE [LARGE SCALE GENOMIC DNA]</scope>
</reference>
<proteinExistence type="evidence at protein level"/>
<evidence type="ECO:0000255" key="1">
    <source>
        <dbReference type="PROSITE-ProRule" id="PRU00448"/>
    </source>
</evidence>
<evidence type="ECO:0000269" key="2">
    <source>
    </source>
</evidence>
<evidence type="ECO:0000305" key="3"/>
<sequence length="181" mass="20690">MGLQQEISLQPWCHHPAESCQTTTDMTERLSAEQIKEYKGVFEMFDEEGNGEVKTGELEWLMSLLGINPTKSELASMAKDVDRDNKGFFNCDGFLALMGVYHEKAQNQESELRAAFRVFDKEGKGYIDWNTLKYVLMNAGEPLNEVEAEQMMKEADKDGDRTIDYEEFVAMMTGESFKLIQ</sequence>
<protein>
    <recommendedName>
        <fullName>Calmodulin-like protein 6</fullName>
    </recommendedName>
    <alternativeName>
        <fullName>Calglandulin-like protein</fullName>
    </alternativeName>
</protein>